<comment type="function">
    <text evidence="1">Transfers dimethylallyl groups to AMP as part of the biosynthesis of cytokinin phytohormones.</text>
</comment>
<comment type="catalytic activity">
    <reaction>
        <text>dimethylallyl diphosphate + AMP = N(6)-(dimethylallyl)adenosine 5'-phosphate + diphosphate</text>
        <dbReference type="Rhea" id="RHEA:15285"/>
        <dbReference type="ChEBI" id="CHEBI:33019"/>
        <dbReference type="ChEBI" id="CHEBI:57526"/>
        <dbReference type="ChEBI" id="CHEBI:57623"/>
        <dbReference type="ChEBI" id="CHEBI:456215"/>
        <dbReference type="EC" id="2.5.1.27"/>
    </reaction>
</comment>
<comment type="similarity">
    <text evidence="2">Belongs to the isopentenyl transferase family.</text>
</comment>
<sequence length="238" mass="26526">MPVRLYLIWGATTTGKTAQSVALARSAGAPVISLDRVQCCHELAVGSGRPSPSELLGTRREYLCEREVSRGVVSAAEANQLLLDKVARYATQERALILEGGSVSLINAMIRDARWSERGEWILRRIPVPGRAAFMAAARKRVREMLDPPPGQAGILDELQGLWGYPRNHAVLEDIDGYRQIIRYANALQVPICRITSIDPNAKALLIERIAQEYWEHALWQEQEFLGIPASWMRADDA</sequence>
<name>IPT_RALN1</name>
<keyword id="KW-0203">Cytokinin biosynthesis</keyword>
<keyword id="KW-0614">Plasmid</keyword>
<keyword id="KW-1185">Reference proteome</keyword>
<keyword id="KW-0808">Transferase</keyword>
<dbReference type="EC" id="2.5.1.27"/>
<dbReference type="EMBL" id="AL646053">
    <property type="protein sequence ID" value="CAD18376.1"/>
    <property type="molecule type" value="Genomic_DNA"/>
</dbReference>
<dbReference type="RefSeq" id="WP_011004509.1">
    <property type="nucleotide sequence ID" value="NC_003296.1"/>
</dbReference>
<dbReference type="SMR" id="P58592"/>
<dbReference type="STRING" id="267608.RSp1225"/>
<dbReference type="EnsemblBacteria" id="CAD18376">
    <property type="protein sequence ID" value="CAD18376"/>
    <property type="gene ID" value="RSp1225"/>
</dbReference>
<dbReference type="KEGG" id="rso:RSp1225"/>
<dbReference type="PATRIC" id="fig|267608.8.peg.4715"/>
<dbReference type="eggNOG" id="COG0324">
    <property type="taxonomic scope" value="Bacteria"/>
</dbReference>
<dbReference type="HOGENOM" id="CLU_1115409_0_0_4"/>
<dbReference type="Proteomes" id="UP000001436">
    <property type="component" value="Plasmid megaplasmid Rsp"/>
</dbReference>
<dbReference type="GO" id="GO:0009824">
    <property type="term" value="F:AMP dimethylallyltransferase activity"/>
    <property type="evidence" value="ECO:0007669"/>
    <property type="project" value="UniProtKB-EC"/>
</dbReference>
<dbReference type="GO" id="GO:0009691">
    <property type="term" value="P:cytokinin biosynthetic process"/>
    <property type="evidence" value="ECO:0007669"/>
    <property type="project" value="UniProtKB-KW"/>
</dbReference>
<dbReference type="Gene3D" id="1.10.287.890">
    <property type="entry name" value="Crystal structure of tRNA isopentenylpyrophosphate transferase (bh2366) domain"/>
    <property type="match status" value="1"/>
</dbReference>
<dbReference type="Gene3D" id="3.40.50.300">
    <property type="entry name" value="P-loop containing nucleotide triphosphate hydrolases"/>
    <property type="match status" value="1"/>
</dbReference>
<dbReference type="InterPro" id="IPR027417">
    <property type="entry name" value="P-loop_NTPase"/>
</dbReference>
<dbReference type="InterPro" id="IPR002648">
    <property type="entry name" value="Tzs"/>
</dbReference>
<dbReference type="Pfam" id="PF01745">
    <property type="entry name" value="IPT"/>
    <property type="match status" value="1"/>
</dbReference>
<dbReference type="PIRSF" id="PIRSF000507">
    <property type="entry name" value="IPT"/>
    <property type="match status" value="1"/>
</dbReference>
<dbReference type="SUPFAM" id="SSF52540">
    <property type="entry name" value="P-loop containing nucleoside triphosphate hydrolases"/>
    <property type="match status" value="1"/>
</dbReference>
<gene>
    <name type="primary">tzs</name>
    <name type="ordered locus">RSp1225</name>
    <name type="ORF">RS03169</name>
</gene>
<evidence type="ECO:0000250" key="1"/>
<evidence type="ECO:0000305" key="2"/>
<organism>
    <name type="scientific">Ralstonia nicotianae (strain ATCC BAA-1114 / GMI1000)</name>
    <name type="common">Ralstonia solanacearum</name>
    <dbReference type="NCBI Taxonomy" id="267608"/>
    <lineage>
        <taxon>Bacteria</taxon>
        <taxon>Pseudomonadati</taxon>
        <taxon>Pseudomonadota</taxon>
        <taxon>Betaproteobacteria</taxon>
        <taxon>Burkholderiales</taxon>
        <taxon>Burkholderiaceae</taxon>
        <taxon>Ralstonia</taxon>
        <taxon>Ralstonia solanacearum species complex</taxon>
    </lineage>
</organism>
<geneLocation type="plasmid">
    <name>megaplasmid Rsp</name>
</geneLocation>
<protein>
    <recommendedName>
        <fullName>Adenylate dimethylallyltransferase</fullName>
        <ecNumber>2.5.1.27</ecNumber>
    </recommendedName>
    <alternativeName>
        <fullName>Dimethylallyl transferase</fullName>
    </alternativeName>
    <alternativeName>
        <fullName>Isopentenyl transferase</fullName>
    </alternativeName>
    <alternativeName>
        <fullName>Trans-zeatin producing protein</fullName>
    </alternativeName>
</protein>
<accession>P58592</accession>
<reference key="1">
    <citation type="journal article" date="2002" name="Nature">
        <title>Genome sequence of the plant pathogen Ralstonia solanacearum.</title>
        <authorList>
            <person name="Salanoubat M."/>
            <person name="Genin S."/>
            <person name="Artiguenave F."/>
            <person name="Gouzy J."/>
            <person name="Mangenot S."/>
            <person name="Arlat M."/>
            <person name="Billault A."/>
            <person name="Brottier P."/>
            <person name="Camus J.-C."/>
            <person name="Cattolico L."/>
            <person name="Chandler M."/>
            <person name="Choisne N."/>
            <person name="Claudel-Renard C."/>
            <person name="Cunnac S."/>
            <person name="Demange N."/>
            <person name="Gaspin C."/>
            <person name="Lavie M."/>
            <person name="Moisan A."/>
            <person name="Robert C."/>
            <person name="Saurin W."/>
            <person name="Schiex T."/>
            <person name="Siguier P."/>
            <person name="Thebault P."/>
            <person name="Whalen M."/>
            <person name="Wincker P."/>
            <person name="Levy M."/>
            <person name="Weissenbach J."/>
            <person name="Boucher C.A."/>
        </authorList>
    </citation>
    <scope>NUCLEOTIDE SEQUENCE [LARGE SCALE GENOMIC DNA]</scope>
    <source>
        <strain>ATCC BAA-1114 / GMI1000</strain>
    </source>
</reference>
<feature type="chain" id="PRO_0000216436" description="Adenylate dimethylallyltransferase">
    <location>
        <begin position="1"/>
        <end position="238"/>
    </location>
</feature>
<proteinExistence type="inferred from homology"/>